<gene>
    <name type="primary">relA</name>
    <name type="synonym">rel</name>
</gene>
<accession>Q54089</accession>
<name>RELA_STREQ</name>
<feature type="chain" id="PRO_0000166565" description="Bifunctional (p)ppGpp synthase/hydrolase RelA">
    <location>
        <begin position="1"/>
        <end position="739"/>
    </location>
</feature>
<feature type="domain" description="HD" evidence="3">
    <location>
        <begin position="50"/>
        <end position="149"/>
    </location>
</feature>
<feature type="domain" description="TGS" evidence="4">
    <location>
        <begin position="393"/>
        <end position="454"/>
    </location>
</feature>
<feature type="domain" description="ACT" evidence="2">
    <location>
        <begin position="664"/>
        <end position="739"/>
    </location>
</feature>
<feature type="active site" description="Nucleophile, for hydrolase activity" evidence="1">
    <location>
        <position position="81"/>
    </location>
</feature>
<feature type="active site" description="Nucleophile, for hydrolase activity" evidence="1">
    <location>
        <position position="82"/>
    </location>
</feature>
<feature type="binding site">
    <location>
        <position position="53"/>
    </location>
    <ligand>
        <name>Mn(2+)</name>
        <dbReference type="ChEBI" id="CHEBI:29035"/>
    </ligand>
</feature>
<feature type="binding site">
    <location>
        <position position="77"/>
    </location>
    <ligand>
        <name>Mn(2+)</name>
        <dbReference type="ChEBI" id="CHEBI:29035"/>
    </ligand>
</feature>
<feature type="binding site">
    <location>
        <position position="144"/>
    </location>
    <ligand>
        <name>Mn(2+)</name>
        <dbReference type="ChEBI" id="CHEBI:29035"/>
    </ligand>
</feature>
<feature type="binding site" evidence="1">
    <location>
        <position position="264"/>
    </location>
    <ligand>
        <name>Mg(2+)</name>
        <dbReference type="ChEBI" id="CHEBI:18420"/>
    </ligand>
</feature>
<feature type="mutagenesis site" description="No hydrolase activity." evidence="6">
    <original>R</original>
    <variation>Q</variation>
    <location>
        <position position="44"/>
    </location>
</feature>
<feature type="mutagenesis site" description="No hydrolase activity." evidence="6">
    <original>D</original>
    <variation>A</variation>
    <location>
        <position position="78"/>
    </location>
</feature>
<feature type="mutagenesis site" description="No hydrolase activity." evidence="6">
    <original>E</original>
    <variation>G</variation>
    <location>
        <position position="81"/>
    </location>
</feature>
<feature type="mutagenesis site" description="No hydrolase activity." evidence="6">
    <original>D</original>
    <variation>V</variation>
    <location>
        <position position="82"/>
    </location>
</feature>
<feature type="mutagenesis site" description="No hydrolase activity." evidence="6">
    <original>T</original>
    <variation>A</variation>
    <variation>P</variation>
    <location>
        <position position="151"/>
    </location>
</feature>
<feature type="mutagenesis site" description="No synthase activity." evidence="6">
    <original>D</original>
    <variation>G</variation>
    <location>
        <position position="264"/>
    </location>
</feature>
<feature type="mutagenesis site" description="No synthase activity." evidence="6">
    <original>E</original>
    <variation>Q</variation>
    <location>
        <position position="323"/>
    </location>
</feature>
<feature type="helix" evidence="8">
    <location>
        <begin position="9"/>
        <end position="19"/>
    </location>
</feature>
<feature type="helix" evidence="8">
    <location>
        <begin position="22"/>
        <end position="38"/>
    </location>
</feature>
<feature type="turn" evidence="8">
    <location>
        <begin position="39"/>
        <end position="41"/>
    </location>
</feature>
<feature type="helix" evidence="8">
    <location>
        <begin position="52"/>
        <end position="63"/>
    </location>
</feature>
<feature type="helix" evidence="8">
    <location>
        <begin position="68"/>
        <end position="76"/>
    </location>
</feature>
<feature type="helix" evidence="8">
    <location>
        <begin position="79"/>
        <end position="82"/>
    </location>
</feature>
<feature type="helix" evidence="8">
    <location>
        <begin position="87"/>
        <end position="94"/>
    </location>
</feature>
<feature type="helix" evidence="8">
    <location>
        <begin position="96"/>
        <end position="108"/>
    </location>
</feature>
<feature type="turn" evidence="8">
    <location>
        <begin position="128"/>
        <end position="130"/>
    </location>
</feature>
<feature type="helix" evidence="8">
    <location>
        <begin position="135"/>
        <end position="150"/>
    </location>
</feature>
<feature type="helix" evidence="8">
    <location>
        <begin position="160"/>
        <end position="169"/>
    </location>
</feature>
<feature type="helix" evidence="8">
    <location>
        <begin position="171"/>
        <end position="177"/>
    </location>
</feature>
<feature type="helix" evidence="8">
    <location>
        <begin position="181"/>
        <end position="195"/>
    </location>
</feature>
<feature type="helix" evidence="8">
    <location>
        <begin position="197"/>
        <end position="209"/>
    </location>
</feature>
<feature type="helix" evidence="8">
    <location>
        <begin position="211"/>
        <end position="230"/>
    </location>
</feature>
<feature type="turn" evidence="8">
    <location>
        <begin position="231"/>
        <end position="233"/>
    </location>
</feature>
<feature type="strand" evidence="8">
    <location>
        <begin position="237"/>
        <end position="240"/>
    </location>
</feature>
<feature type="helix" evidence="8">
    <location>
        <begin position="245"/>
        <end position="255"/>
    </location>
</feature>
<feature type="helix" evidence="8">
    <location>
        <begin position="256"/>
        <end position="258"/>
    </location>
</feature>
<feature type="helix" evidence="8">
    <location>
        <begin position="263"/>
        <end position="265"/>
    </location>
</feature>
<feature type="strand" evidence="8">
    <location>
        <begin position="267"/>
        <end position="274"/>
    </location>
</feature>
<feature type="helix" evidence="8">
    <location>
        <begin position="275"/>
        <end position="288"/>
    </location>
</feature>
<feature type="turn" evidence="8">
    <location>
        <begin position="299"/>
        <end position="301"/>
    </location>
</feature>
<feature type="strand" evidence="8">
    <location>
        <begin position="311"/>
        <end position="316"/>
    </location>
</feature>
<feature type="strand" evidence="8">
    <location>
        <begin position="318"/>
        <end position="328"/>
    </location>
</feature>
<feature type="helix" evidence="8">
    <location>
        <begin position="329"/>
        <end position="337"/>
    </location>
</feature>
<feature type="helix" evidence="8">
    <location>
        <begin position="364"/>
        <end position="370"/>
    </location>
</feature>
<sequence>MAKEINLTGEEVVALAAKYMNETDAAFVKKALDYATAAHFYQVRKSGEPYIVHPIQVAGILADLHLDAVTVACGFLHDVVEDTDITLDNIEFDFGKDVRDIVDGVTKLGKVEYKSHEEQLAENHRKMLMAMSKDIRVILVKLADRLHNMRTLKHLRKDKQERISRETMEIYAPLAHRLGISRIKWELEDLAFRYLNETEFYKISHMMNEKRREREALVDDIVTKIKSYTTEQGLFGDVYGRPKHIYSIYRKMRDKKKRFDQIFDLIAIRCVMETQSDVYAMVGYIHELWRPMPGRFKDYIAAPKANGYQSIHTTVYGPKGPIEIQIRTKEMHQVAEYGVAAHWAYKKGVRGKVNQAEQKVGMNWIKELVELQDASNGDAVDFVDSVKEDIFSERIYVFTPTGAVQELPKDSGPIDFAYAIHTQVGEKAIGAKVNGRMVPLTAKLKTGDVVEIVTNPNSFGPSRDWIKLVKTNKARNKIRQFFKNQDKELSVNKGRDMLVSYFQEQGYVANKYLDKKRIEAILPKVSVKSEESLYAAVGFGDISPVSVFNKLTEKERREEERAKAKAEAEELVNGGEIKHENKDVLKVRSENGVIIQGASGLLMRIAKCCNPVPGDPIEGYITKGRGIAIHRADCNNIKSQDGYQERLIEVEWDLDNSSKDYQAEIDIYGLNRRGLLNDVLQILSNSTKSISTVNAQPTKDMKFANIHVSFGIPNLTHLTTVVEKIKAVPDVYSVKRTNG</sequence>
<protein>
    <recommendedName>
        <fullName>Bifunctional (p)ppGpp synthase/hydrolase RelA</fullName>
    </recommendedName>
    <domain>
        <recommendedName>
            <fullName>GTP pyrophosphokinase</fullName>
            <ecNumber>2.7.6.5</ecNumber>
        </recommendedName>
        <alternativeName>
            <fullName>(p)ppGpp synthase</fullName>
        </alternativeName>
        <alternativeName>
            <fullName>ATP:GTP 3'-pyrophosphotransferase</fullName>
        </alternativeName>
        <alternativeName>
            <fullName>Stringent response-like protein</fullName>
        </alternativeName>
        <alternativeName>
            <fullName>ppGpp synthase I</fullName>
        </alternativeName>
    </domain>
    <domain>
        <recommendedName>
            <fullName>Guanosine-3',5'-bis(diphosphate) 3'-pyrophosphohydrolase</fullName>
            <ecNumber>3.1.7.2</ecNumber>
        </recommendedName>
        <alternativeName>
            <fullName>Penta-phosphate guanosine-3'-pyrophosphohydrolase</fullName>
            <shortName>(ppGpp)ase</shortName>
        </alternativeName>
    </domain>
</protein>
<reference key="1">
    <citation type="journal article" date="1993" name="Mol. Gen. Genet.">
        <title>Genetic organization of the streptokinase region of the Streptococcus equisimilis H46A chromosome.</title>
        <authorList>
            <person name="Mechold U."/>
            <person name="Steiner K."/>
            <person name="Vettermann S."/>
            <person name="Malke H."/>
        </authorList>
    </citation>
    <scope>NUCLEOTIDE SEQUENCE [GENOMIC DNA]</scope>
    <source>
        <strain>H46A</strain>
    </source>
</reference>
<reference key="2">
    <citation type="journal article" date="2002" name="J. Bacteriol.">
        <title>Intramolecular regulation of the opposing (p)ppGpp catalytic activities of Rel(Seq), the Rel/Spo enzyme from Streptococcus equisimilis.</title>
        <authorList>
            <person name="Mechold U."/>
            <person name="Murphy H."/>
            <person name="Brown L."/>
            <person name="Cashel M."/>
        </authorList>
    </citation>
    <scope>BIOPHYSICOCHEMICAL PROPERTIES</scope>
    <scope>ACTIVITY REGULATION</scope>
</reference>
<reference key="3">
    <citation type="journal article" date="2004" name="Cell">
        <title>Conformational antagonism between opposing active sites in a bifunctional RelA/SpoT homolog modulates (p)ppGpp metabolism during the stringent response.</title>
        <authorList>
            <person name="Hogg T."/>
            <person name="Mechold U."/>
            <person name="Malke H."/>
            <person name="Cashel M."/>
            <person name="Hilgenfeld R."/>
        </authorList>
    </citation>
    <scope>X-RAY CRYSTALLOGRAPHY (2.1 ANGSTROMS) OF 1-385 BOUND TO GUANOSINE-NUCLEOTIDE DERIVATIVES</scope>
    <scope>HYDROLASE AND SYNTHASE ACTIVITIES</scope>
    <scope>COFACTOR</scope>
    <scope>ACTIVITY REGULATION</scope>
    <scope>MUTAGENESIS OF ARG-44; ASP-78; GLU-81; ASP-82; THR-151; ASP-264 AND GLU-323</scope>
    <source>
        <strain>H46A</strain>
    </source>
</reference>
<dbReference type="EC" id="2.7.6.5"/>
<dbReference type="EC" id="3.1.7.2"/>
<dbReference type="EMBL" id="X72832">
    <property type="protein sequence ID" value="CAA51353.1"/>
    <property type="molecule type" value="Genomic_DNA"/>
</dbReference>
<dbReference type="PIR" id="S39975">
    <property type="entry name" value="S39975"/>
</dbReference>
<dbReference type="RefSeq" id="WP_138098181.1">
    <property type="nucleotide sequence ID" value="NZ_CBCRYK010000002.1"/>
</dbReference>
<dbReference type="PDB" id="1VJ7">
    <property type="method" value="X-ray"/>
    <property type="resolution" value="2.10 A"/>
    <property type="chains" value="A/B=1-385"/>
</dbReference>
<dbReference type="PDBsum" id="1VJ7"/>
<dbReference type="SMR" id="Q54089"/>
<dbReference type="ChEMBL" id="CHEMBL1163118"/>
<dbReference type="DrugBank" id="DB02836">
    <property type="generic name" value="Guanosine 5'-diphosphate 2':3'-cyclic monophosphate"/>
</dbReference>
<dbReference type="DrugBank" id="DB04315">
    <property type="generic name" value="Guanosine-5'-Diphosphate"/>
</dbReference>
<dbReference type="SABIO-RK" id="Q54089"/>
<dbReference type="UniPathway" id="UPA00908">
    <property type="reaction ID" value="UER00884"/>
</dbReference>
<dbReference type="UniPathway" id="UPA00908">
    <property type="reaction ID" value="UER00886"/>
</dbReference>
<dbReference type="EvolutionaryTrace" id="Q54089"/>
<dbReference type="GO" id="GO:0005886">
    <property type="term" value="C:plasma membrane"/>
    <property type="evidence" value="ECO:0007669"/>
    <property type="project" value="TreeGrafter"/>
</dbReference>
<dbReference type="GO" id="GO:0005524">
    <property type="term" value="F:ATP binding"/>
    <property type="evidence" value="ECO:0007669"/>
    <property type="project" value="UniProtKB-KW"/>
</dbReference>
<dbReference type="GO" id="GO:0005525">
    <property type="term" value="F:GTP binding"/>
    <property type="evidence" value="ECO:0007669"/>
    <property type="project" value="UniProtKB-KW"/>
</dbReference>
<dbReference type="GO" id="GO:0008728">
    <property type="term" value="F:GTP diphosphokinase activity"/>
    <property type="evidence" value="ECO:0007669"/>
    <property type="project" value="UniProtKB-EC"/>
</dbReference>
<dbReference type="GO" id="GO:0008893">
    <property type="term" value="F:guanosine-3',5'-bis(diphosphate) 3'-diphosphatase activity"/>
    <property type="evidence" value="ECO:0007669"/>
    <property type="project" value="UniProtKB-EC"/>
</dbReference>
<dbReference type="GO" id="GO:0016301">
    <property type="term" value="F:kinase activity"/>
    <property type="evidence" value="ECO:0007669"/>
    <property type="project" value="UniProtKB-KW"/>
</dbReference>
<dbReference type="GO" id="GO:0046872">
    <property type="term" value="F:metal ion binding"/>
    <property type="evidence" value="ECO:0007669"/>
    <property type="project" value="UniProtKB-KW"/>
</dbReference>
<dbReference type="GO" id="GO:0015970">
    <property type="term" value="P:guanosine tetraphosphate biosynthetic process"/>
    <property type="evidence" value="ECO:0007669"/>
    <property type="project" value="UniProtKB-UniPathway"/>
</dbReference>
<dbReference type="CDD" id="cd04876">
    <property type="entry name" value="ACT_RelA-SpoT"/>
    <property type="match status" value="1"/>
</dbReference>
<dbReference type="CDD" id="cd00077">
    <property type="entry name" value="HDc"/>
    <property type="match status" value="1"/>
</dbReference>
<dbReference type="CDD" id="cd05399">
    <property type="entry name" value="NT_Rel-Spo_like"/>
    <property type="match status" value="1"/>
</dbReference>
<dbReference type="CDD" id="cd01668">
    <property type="entry name" value="TGS_RSH"/>
    <property type="match status" value="1"/>
</dbReference>
<dbReference type="FunFam" id="3.10.20.30:FF:000002">
    <property type="entry name" value="GTP pyrophosphokinase (RelA/SpoT)"/>
    <property type="match status" value="1"/>
</dbReference>
<dbReference type="FunFam" id="1.10.3210.10:FF:000001">
    <property type="entry name" value="GTP pyrophosphokinase RelA"/>
    <property type="match status" value="1"/>
</dbReference>
<dbReference type="FunFam" id="3.30.460.10:FF:000001">
    <property type="entry name" value="GTP pyrophosphokinase RelA"/>
    <property type="match status" value="1"/>
</dbReference>
<dbReference type="Gene3D" id="3.10.20.30">
    <property type="match status" value="1"/>
</dbReference>
<dbReference type="Gene3D" id="3.30.70.260">
    <property type="match status" value="1"/>
</dbReference>
<dbReference type="Gene3D" id="3.30.460.10">
    <property type="entry name" value="Beta Polymerase, domain 2"/>
    <property type="match status" value="1"/>
</dbReference>
<dbReference type="Gene3D" id="1.10.3210.10">
    <property type="entry name" value="Hypothetical protein af1432"/>
    <property type="match status" value="1"/>
</dbReference>
<dbReference type="InterPro" id="IPR045865">
    <property type="entry name" value="ACT-like_dom_sf"/>
</dbReference>
<dbReference type="InterPro" id="IPR002912">
    <property type="entry name" value="ACT_dom"/>
</dbReference>
<dbReference type="InterPro" id="IPR012675">
    <property type="entry name" value="Beta-grasp_dom_sf"/>
</dbReference>
<dbReference type="InterPro" id="IPR003607">
    <property type="entry name" value="HD/PDEase_dom"/>
</dbReference>
<dbReference type="InterPro" id="IPR006674">
    <property type="entry name" value="HD_domain"/>
</dbReference>
<dbReference type="InterPro" id="IPR043519">
    <property type="entry name" value="NT_sf"/>
</dbReference>
<dbReference type="InterPro" id="IPR004811">
    <property type="entry name" value="RelA/Spo_fam"/>
</dbReference>
<dbReference type="InterPro" id="IPR045600">
    <property type="entry name" value="RelA/SpoT_AH_RIS"/>
</dbReference>
<dbReference type="InterPro" id="IPR007685">
    <property type="entry name" value="RelA_SpoT"/>
</dbReference>
<dbReference type="InterPro" id="IPR004095">
    <property type="entry name" value="TGS"/>
</dbReference>
<dbReference type="InterPro" id="IPR012676">
    <property type="entry name" value="TGS-like"/>
</dbReference>
<dbReference type="InterPro" id="IPR033655">
    <property type="entry name" value="TGS_RelA/SpoT"/>
</dbReference>
<dbReference type="NCBIfam" id="TIGR00691">
    <property type="entry name" value="spoT_relA"/>
    <property type="match status" value="1"/>
</dbReference>
<dbReference type="PANTHER" id="PTHR21262:SF31">
    <property type="entry name" value="GTP PYROPHOSPHOKINASE"/>
    <property type="match status" value="1"/>
</dbReference>
<dbReference type="PANTHER" id="PTHR21262">
    <property type="entry name" value="GUANOSINE-3',5'-BIS DIPHOSPHATE 3'-PYROPHOSPHOHYDROLASE"/>
    <property type="match status" value="1"/>
</dbReference>
<dbReference type="Pfam" id="PF13291">
    <property type="entry name" value="ACT_4"/>
    <property type="match status" value="1"/>
</dbReference>
<dbReference type="Pfam" id="PF13328">
    <property type="entry name" value="HD_4"/>
    <property type="match status" value="1"/>
</dbReference>
<dbReference type="Pfam" id="PF19296">
    <property type="entry name" value="RelA_AH_RIS"/>
    <property type="match status" value="1"/>
</dbReference>
<dbReference type="Pfam" id="PF04607">
    <property type="entry name" value="RelA_SpoT"/>
    <property type="match status" value="1"/>
</dbReference>
<dbReference type="Pfam" id="PF02824">
    <property type="entry name" value="TGS"/>
    <property type="match status" value="1"/>
</dbReference>
<dbReference type="SMART" id="SM00471">
    <property type="entry name" value="HDc"/>
    <property type="match status" value="1"/>
</dbReference>
<dbReference type="SMART" id="SM00954">
    <property type="entry name" value="RelA_SpoT"/>
    <property type="match status" value="1"/>
</dbReference>
<dbReference type="SUPFAM" id="SSF55021">
    <property type="entry name" value="ACT-like"/>
    <property type="match status" value="1"/>
</dbReference>
<dbReference type="SUPFAM" id="SSF109604">
    <property type="entry name" value="HD-domain/PDEase-like"/>
    <property type="match status" value="1"/>
</dbReference>
<dbReference type="SUPFAM" id="SSF81301">
    <property type="entry name" value="Nucleotidyltransferase"/>
    <property type="match status" value="1"/>
</dbReference>
<dbReference type="SUPFAM" id="SSF81271">
    <property type="entry name" value="TGS-like"/>
    <property type="match status" value="1"/>
</dbReference>
<dbReference type="PROSITE" id="PS51671">
    <property type="entry name" value="ACT"/>
    <property type="match status" value="1"/>
</dbReference>
<dbReference type="PROSITE" id="PS51831">
    <property type="entry name" value="HD"/>
    <property type="match status" value="1"/>
</dbReference>
<dbReference type="PROSITE" id="PS51880">
    <property type="entry name" value="TGS"/>
    <property type="match status" value="1"/>
</dbReference>
<proteinExistence type="evidence at protein level"/>
<comment type="function">
    <text>In eubacteria ppGpp (guanosine 3'-diphosphate 5'-diphosphate) is a mediator of the stringent response that coordinates a variety of cellular activities in response to changes in nutritional abundance. This enzyme catalyzes both the formation of pppGpp which is then hydrolyzed to form ppGpp, and the hydrolysis of ppGpp. The enzyme does not simultaneously display both synthase and hydrolase activities. In the structure of residues 1-385 there are 2 conformations seen, the hydrolase-OFF/synthase-ON and hydrolase-ON/synthase-OFF, suggesting there is ligand-induced signal transmission between the 2 active sites.</text>
</comment>
<comment type="catalytic activity">
    <reaction>
        <text>GTP + ATP = guanosine 3'-diphosphate 5'-triphosphate + AMP</text>
        <dbReference type="Rhea" id="RHEA:22088"/>
        <dbReference type="ChEBI" id="CHEBI:30616"/>
        <dbReference type="ChEBI" id="CHEBI:37565"/>
        <dbReference type="ChEBI" id="CHEBI:142410"/>
        <dbReference type="ChEBI" id="CHEBI:456215"/>
        <dbReference type="EC" id="2.7.6.5"/>
    </reaction>
</comment>
<comment type="catalytic activity">
    <reaction>
        <text>guanosine 3',5'-bis(diphosphate) + H2O = GDP + diphosphate + H(+)</text>
        <dbReference type="Rhea" id="RHEA:14253"/>
        <dbReference type="ChEBI" id="CHEBI:15377"/>
        <dbReference type="ChEBI" id="CHEBI:15378"/>
        <dbReference type="ChEBI" id="CHEBI:33019"/>
        <dbReference type="ChEBI" id="CHEBI:58189"/>
        <dbReference type="ChEBI" id="CHEBI:77828"/>
        <dbReference type="EC" id="3.1.7.2"/>
    </reaction>
</comment>
<comment type="cofactor">
    <cofactor evidence="7">
        <name>Mg(2+)</name>
        <dbReference type="ChEBI" id="CHEBI:18420"/>
    </cofactor>
    <text evidence="7">Binds 1 Mg(2+) ion per subunit.</text>
</comment>
<comment type="cofactor">
    <cofactor evidence="6">
        <name>Mn(2+)</name>
        <dbReference type="ChEBI" id="CHEBI:29035"/>
    </cofactor>
    <text evidence="6">Binds 1 Mn(2+) ion per subunit.</text>
</comment>
<comment type="activity regulation">
    <text evidence="5 6">Alpha-beta methylenyl ATP, an ATP-analog inhibitor of the synthase activity also reduces the hydrolase activity about 4-fold.</text>
</comment>
<comment type="biophysicochemical properties">
    <kinetics>
        <KM evidence="5">2 mM for GTP</KM>
        <KM evidence="5">5 mM for ATP</KM>
    </kinetics>
</comment>
<comment type="pathway">
    <text>Purine metabolism; ppGpp biosynthesis; ppGpp from GDP: step 1/1.</text>
</comment>
<comment type="pathway">
    <text>Purine metabolism; ppGpp biosynthesis; ppGpp from GTP: step 1/2.</text>
</comment>
<comment type="domain">
    <text>Based on a random mutagenesis study of the catalytic fragment (residues 1-385), the (p)ppGpp phosphohydrolase domain seems to encompass approximately the first 225 residues, while the (p)ppGpp synthase domain seems to be found between residues 226 and 385.</text>
</comment>
<comment type="similarity">
    <text evidence="7">Belongs to the RelA/SpoT family.</text>
</comment>
<evidence type="ECO:0000255" key="1"/>
<evidence type="ECO:0000255" key="2">
    <source>
        <dbReference type="PROSITE-ProRule" id="PRU01007"/>
    </source>
</evidence>
<evidence type="ECO:0000255" key="3">
    <source>
        <dbReference type="PROSITE-ProRule" id="PRU01175"/>
    </source>
</evidence>
<evidence type="ECO:0000255" key="4">
    <source>
        <dbReference type="PROSITE-ProRule" id="PRU01228"/>
    </source>
</evidence>
<evidence type="ECO:0000269" key="5">
    <source>
    </source>
</evidence>
<evidence type="ECO:0000269" key="6">
    <source>
    </source>
</evidence>
<evidence type="ECO:0000305" key="7"/>
<evidence type="ECO:0007829" key="8">
    <source>
        <dbReference type="PDB" id="1VJ7"/>
    </source>
</evidence>
<organism>
    <name type="scientific">Streptococcus dysgalactiae subsp. equisimilis</name>
    <name type="common">Streptococcus equisimilis</name>
    <dbReference type="NCBI Taxonomy" id="119602"/>
    <lineage>
        <taxon>Bacteria</taxon>
        <taxon>Bacillati</taxon>
        <taxon>Bacillota</taxon>
        <taxon>Bacilli</taxon>
        <taxon>Lactobacillales</taxon>
        <taxon>Streptococcaceae</taxon>
        <taxon>Streptococcus</taxon>
    </lineage>
</organism>
<keyword id="KW-0002">3D-structure</keyword>
<keyword id="KW-0067">ATP-binding</keyword>
<keyword id="KW-0342">GTP-binding</keyword>
<keyword id="KW-0378">Hydrolase</keyword>
<keyword id="KW-0418">Kinase</keyword>
<keyword id="KW-0460">Magnesium</keyword>
<keyword id="KW-0464">Manganese</keyword>
<keyword id="KW-0479">Metal-binding</keyword>
<keyword id="KW-0547">Nucleotide-binding</keyword>
<keyword id="KW-0808">Transferase</keyword>